<feature type="chain" id="PRO_1000099628" description="Lipoyl synthase">
    <location>
        <begin position="1"/>
        <end position="321"/>
    </location>
</feature>
<feature type="domain" description="Radical SAM core" evidence="2">
    <location>
        <begin position="80"/>
        <end position="297"/>
    </location>
</feature>
<feature type="binding site" evidence="1">
    <location>
        <position position="68"/>
    </location>
    <ligand>
        <name>[4Fe-4S] cluster</name>
        <dbReference type="ChEBI" id="CHEBI:49883"/>
        <label>1</label>
    </ligand>
</feature>
<feature type="binding site" evidence="1">
    <location>
        <position position="73"/>
    </location>
    <ligand>
        <name>[4Fe-4S] cluster</name>
        <dbReference type="ChEBI" id="CHEBI:49883"/>
        <label>1</label>
    </ligand>
</feature>
<feature type="binding site" evidence="1">
    <location>
        <position position="79"/>
    </location>
    <ligand>
        <name>[4Fe-4S] cluster</name>
        <dbReference type="ChEBI" id="CHEBI:49883"/>
        <label>1</label>
    </ligand>
</feature>
<feature type="binding site" evidence="1">
    <location>
        <position position="94"/>
    </location>
    <ligand>
        <name>[4Fe-4S] cluster</name>
        <dbReference type="ChEBI" id="CHEBI:49883"/>
        <label>2</label>
        <note>4Fe-4S-S-AdoMet</note>
    </ligand>
</feature>
<feature type="binding site" evidence="1">
    <location>
        <position position="98"/>
    </location>
    <ligand>
        <name>[4Fe-4S] cluster</name>
        <dbReference type="ChEBI" id="CHEBI:49883"/>
        <label>2</label>
        <note>4Fe-4S-S-AdoMet</note>
    </ligand>
</feature>
<feature type="binding site" evidence="1">
    <location>
        <position position="101"/>
    </location>
    <ligand>
        <name>[4Fe-4S] cluster</name>
        <dbReference type="ChEBI" id="CHEBI:49883"/>
        <label>2</label>
        <note>4Fe-4S-S-AdoMet</note>
    </ligand>
</feature>
<feature type="binding site" evidence="1">
    <location>
        <position position="308"/>
    </location>
    <ligand>
        <name>[4Fe-4S] cluster</name>
        <dbReference type="ChEBI" id="CHEBI:49883"/>
        <label>1</label>
    </ligand>
</feature>
<evidence type="ECO:0000255" key="1">
    <source>
        <dbReference type="HAMAP-Rule" id="MF_00206"/>
    </source>
</evidence>
<evidence type="ECO:0000255" key="2">
    <source>
        <dbReference type="PROSITE-ProRule" id="PRU01266"/>
    </source>
</evidence>
<sequence length="321" mass="36042">MSKPIVMERGVKYRDADKMALIPVKNVVTERDALLRKPEWMKIKLPADSTRIQGIKAAMRKNGLHSVCEEASCPNLAECFNHGTATFMILGAICTRRCPFCDVAHGRPVAPDAEEPQKLAQTIADMALRYVVITSVDRDDLRDGGAQHFADCITAIRAKSPEIKIETLVPDFRGRMDRALDILNATPPDVFNHNLENVPRIYRQVRPGADYNWSLKLLERFKEAHPEIPTKSGLMVGLGETNAEIIEVMRDLRRHGVTMLTLGQYLQPSRHHLPVQRYVSPEEFDEMKAEALAMGFTHAACGPFVRSSYHADLQAKGMEVK</sequence>
<reference key="1">
    <citation type="journal article" date="2011" name="J. Bacteriol.">
        <title>Comparative genomics of 28 Salmonella enterica isolates: evidence for CRISPR-mediated adaptive sublineage evolution.</title>
        <authorList>
            <person name="Fricke W.F."/>
            <person name="Mammel M.K."/>
            <person name="McDermott P.F."/>
            <person name="Tartera C."/>
            <person name="White D.G."/>
            <person name="Leclerc J.E."/>
            <person name="Ravel J."/>
            <person name="Cebula T.A."/>
        </authorList>
    </citation>
    <scope>NUCLEOTIDE SEQUENCE [LARGE SCALE GENOMIC DNA]</scope>
    <source>
        <strain>CT_02021853</strain>
    </source>
</reference>
<dbReference type="EC" id="2.8.1.8" evidence="1"/>
<dbReference type="EMBL" id="CP001144">
    <property type="protein sequence ID" value="ACH75228.1"/>
    <property type="molecule type" value="Genomic_DNA"/>
</dbReference>
<dbReference type="RefSeq" id="WP_000042640.1">
    <property type="nucleotide sequence ID" value="NC_011205.1"/>
</dbReference>
<dbReference type="SMR" id="B5FMM8"/>
<dbReference type="KEGG" id="sed:SeD_A0734"/>
<dbReference type="HOGENOM" id="CLU_033144_2_1_6"/>
<dbReference type="UniPathway" id="UPA00538">
    <property type="reaction ID" value="UER00593"/>
</dbReference>
<dbReference type="Proteomes" id="UP000008322">
    <property type="component" value="Chromosome"/>
</dbReference>
<dbReference type="GO" id="GO:0005737">
    <property type="term" value="C:cytoplasm"/>
    <property type="evidence" value="ECO:0007669"/>
    <property type="project" value="UniProtKB-SubCell"/>
</dbReference>
<dbReference type="GO" id="GO:0051539">
    <property type="term" value="F:4 iron, 4 sulfur cluster binding"/>
    <property type="evidence" value="ECO:0007669"/>
    <property type="project" value="UniProtKB-UniRule"/>
</dbReference>
<dbReference type="GO" id="GO:0016992">
    <property type="term" value="F:lipoate synthase activity"/>
    <property type="evidence" value="ECO:0007669"/>
    <property type="project" value="UniProtKB-UniRule"/>
</dbReference>
<dbReference type="GO" id="GO:0046872">
    <property type="term" value="F:metal ion binding"/>
    <property type="evidence" value="ECO:0007669"/>
    <property type="project" value="UniProtKB-KW"/>
</dbReference>
<dbReference type="CDD" id="cd01335">
    <property type="entry name" value="Radical_SAM"/>
    <property type="match status" value="1"/>
</dbReference>
<dbReference type="FunFam" id="3.20.20.70:FF:000023">
    <property type="entry name" value="Lipoyl synthase"/>
    <property type="match status" value="1"/>
</dbReference>
<dbReference type="Gene3D" id="3.20.20.70">
    <property type="entry name" value="Aldolase class I"/>
    <property type="match status" value="1"/>
</dbReference>
<dbReference type="HAMAP" id="MF_00206">
    <property type="entry name" value="Lipoyl_synth"/>
    <property type="match status" value="1"/>
</dbReference>
<dbReference type="InterPro" id="IPR013785">
    <property type="entry name" value="Aldolase_TIM"/>
</dbReference>
<dbReference type="InterPro" id="IPR006638">
    <property type="entry name" value="Elp3/MiaA/NifB-like_rSAM"/>
</dbReference>
<dbReference type="InterPro" id="IPR031691">
    <property type="entry name" value="LIAS_N"/>
</dbReference>
<dbReference type="InterPro" id="IPR003698">
    <property type="entry name" value="Lipoyl_synth"/>
</dbReference>
<dbReference type="InterPro" id="IPR007197">
    <property type="entry name" value="rSAM"/>
</dbReference>
<dbReference type="NCBIfam" id="TIGR00510">
    <property type="entry name" value="lipA"/>
    <property type="match status" value="1"/>
</dbReference>
<dbReference type="NCBIfam" id="NF004019">
    <property type="entry name" value="PRK05481.1"/>
    <property type="match status" value="1"/>
</dbReference>
<dbReference type="NCBIfam" id="NF009544">
    <property type="entry name" value="PRK12928.1"/>
    <property type="match status" value="1"/>
</dbReference>
<dbReference type="PANTHER" id="PTHR10949">
    <property type="entry name" value="LIPOYL SYNTHASE"/>
    <property type="match status" value="1"/>
</dbReference>
<dbReference type="PANTHER" id="PTHR10949:SF0">
    <property type="entry name" value="LIPOYL SYNTHASE, MITOCHONDRIAL"/>
    <property type="match status" value="1"/>
</dbReference>
<dbReference type="Pfam" id="PF16881">
    <property type="entry name" value="LIAS_N"/>
    <property type="match status" value="1"/>
</dbReference>
<dbReference type="Pfam" id="PF04055">
    <property type="entry name" value="Radical_SAM"/>
    <property type="match status" value="1"/>
</dbReference>
<dbReference type="PIRSF" id="PIRSF005963">
    <property type="entry name" value="Lipoyl_synth"/>
    <property type="match status" value="1"/>
</dbReference>
<dbReference type="SFLD" id="SFLDF00271">
    <property type="entry name" value="lipoyl_synthase"/>
    <property type="match status" value="1"/>
</dbReference>
<dbReference type="SFLD" id="SFLDS00029">
    <property type="entry name" value="Radical_SAM"/>
    <property type="match status" value="1"/>
</dbReference>
<dbReference type="SMART" id="SM00729">
    <property type="entry name" value="Elp3"/>
    <property type="match status" value="1"/>
</dbReference>
<dbReference type="SUPFAM" id="SSF102114">
    <property type="entry name" value="Radical SAM enzymes"/>
    <property type="match status" value="1"/>
</dbReference>
<dbReference type="PROSITE" id="PS51918">
    <property type="entry name" value="RADICAL_SAM"/>
    <property type="match status" value="1"/>
</dbReference>
<protein>
    <recommendedName>
        <fullName evidence="1">Lipoyl synthase</fullName>
        <ecNumber evidence="1">2.8.1.8</ecNumber>
    </recommendedName>
    <alternativeName>
        <fullName evidence="1">Lip-syn</fullName>
        <shortName evidence="1">LS</shortName>
    </alternativeName>
    <alternativeName>
        <fullName evidence="1">Lipoate synthase</fullName>
    </alternativeName>
    <alternativeName>
        <fullName evidence="1">Lipoic acid synthase</fullName>
    </alternativeName>
    <alternativeName>
        <fullName evidence="1">Sulfur insertion protein LipA</fullName>
    </alternativeName>
</protein>
<accession>B5FMM8</accession>
<keyword id="KW-0004">4Fe-4S</keyword>
<keyword id="KW-0963">Cytoplasm</keyword>
<keyword id="KW-0408">Iron</keyword>
<keyword id="KW-0411">Iron-sulfur</keyword>
<keyword id="KW-0479">Metal-binding</keyword>
<keyword id="KW-0949">S-adenosyl-L-methionine</keyword>
<keyword id="KW-0808">Transferase</keyword>
<comment type="function">
    <text evidence="1">Catalyzes the radical-mediated insertion of two sulfur atoms into the C-6 and C-8 positions of the octanoyl moiety bound to the lipoyl domains of lipoate-dependent enzymes, thereby converting the octanoylated domains into lipoylated derivatives.</text>
</comment>
<comment type="catalytic activity">
    <reaction evidence="1">
        <text>[[Fe-S] cluster scaffold protein carrying a second [4Fe-4S](2+) cluster] + N(6)-octanoyl-L-lysyl-[protein] + 2 oxidized [2Fe-2S]-[ferredoxin] + 2 S-adenosyl-L-methionine + 4 H(+) = [[Fe-S] cluster scaffold protein] + N(6)-[(R)-dihydrolipoyl]-L-lysyl-[protein] + 4 Fe(3+) + 2 hydrogen sulfide + 2 5'-deoxyadenosine + 2 L-methionine + 2 reduced [2Fe-2S]-[ferredoxin]</text>
        <dbReference type="Rhea" id="RHEA:16585"/>
        <dbReference type="Rhea" id="RHEA-COMP:9928"/>
        <dbReference type="Rhea" id="RHEA-COMP:10000"/>
        <dbReference type="Rhea" id="RHEA-COMP:10001"/>
        <dbReference type="Rhea" id="RHEA-COMP:10475"/>
        <dbReference type="Rhea" id="RHEA-COMP:14568"/>
        <dbReference type="Rhea" id="RHEA-COMP:14569"/>
        <dbReference type="ChEBI" id="CHEBI:15378"/>
        <dbReference type="ChEBI" id="CHEBI:17319"/>
        <dbReference type="ChEBI" id="CHEBI:29034"/>
        <dbReference type="ChEBI" id="CHEBI:29919"/>
        <dbReference type="ChEBI" id="CHEBI:33722"/>
        <dbReference type="ChEBI" id="CHEBI:33737"/>
        <dbReference type="ChEBI" id="CHEBI:33738"/>
        <dbReference type="ChEBI" id="CHEBI:57844"/>
        <dbReference type="ChEBI" id="CHEBI:59789"/>
        <dbReference type="ChEBI" id="CHEBI:78809"/>
        <dbReference type="ChEBI" id="CHEBI:83100"/>
        <dbReference type="EC" id="2.8.1.8"/>
    </reaction>
</comment>
<comment type="cofactor">
    <cofactor evidence="1">
        <name>[4Fe-4S] cluster</name>
        <dbReference type="ChEBI" id="CHEBI:49883"/>
    </cofactor>
    <text evidence="1">Binds 2 [4Fe-4S] clusters per subunit. One cluster is coordinated with 3 cysteines and an exchangeable S-adenosyl-L-methionine.</text>
</comment>
<comment type="pathway">
    <text evidence="1">Protein modification; protein lipoylation via endogenous pathway; protein N(6)-(lipoyl)lysine from octanoyl-[acyl-carrier-protein]: step 2/2.</text>
</comment>
<comment type="subcellular location">
    <subcellularLocation>
        <location evidence="1">Cytoplasm</location>
    </subcellularLocation>
</comment>
<comment type="similarity">
    <text evidence="1">Belongs to the radical SAM superfamily. Lipoyl synthase family.</text>
</comment>
<proteinExistence type="inferred from homology"/>
<organism>
    <name type="scientific">Salmonella dublin (strain CT_02021853)</name>
    <dbReference type="NCBI Taxonomy" id="439851"/>
    <lineage>
        <taxon>Bacteria</taxon>
        <taxon>Pseudomonadati</taxon>
        <taxon>Pseudomonadota</taxon>
        <taxon>Gammaproteobacteria</taxon>
        <taxon>Enterobacterales</taxon>
        <taxon>Enterobacteriaceae</taxon>
        <taxon>Salmonella</taxon>
    </lineage>
</organism>
<gene>
    <name evidence="1" type="primary">lipA</name>
    <name type="ordered locus">SeD_A0734</name>
</gene>
<name>LIPA_SALDC</name>